<evidence type="ECO:0000255" key="1">
    <source>
        <dbReference type="HAMAP-Rule" id="MF_00473"/>
    </source>
</evidence>
<organism>
    <name type="scientific">Endomicrobium trichonymphae</name>
    <dbReference type="NCBI Taxonomy" id="1408204"/>
    <lineage>
        <taxon>Bacteria</taxon>
        <taxon>Pseudomonadati</taxon>
        <taxon>Elusimicrobiota</taxon>
        <taxon>Endomicrobiia</taxon>
        <taxon>Endomicrobiales</taxon>
        <taxon>Endomicrobiaceae</taxon>
        <taxon>Candidatus Endomicrobiellum</taxon>
    </lineage>
</organism>
<reference key="1">
    <citation type="journal article" date="2008" name="Proc. Natl. Acad. Sci. U.S.A.">
        <title>Complete genome of the uncultured termite group 1 bacteria in a single host protist cell.</title>
        <authorList>
            <person name="Hongoh Y."/>
            <person name="Sharma V.K."/>
            <person name="Prakash T."/>
            <person name="Noda S."/>
            <person name="Taylor T.D."/>
            <person name="Kudo T."/>
            <person name="Sakaki Y."/>
            <person name="Toyoda A."/>
            <person name="Hattori M."/>
            <person name="Ohkuma M."/>
        </authorList>
    </citation>
    <scope>NUCLEOTIDE SEQUENCE [LARGE SCALE GENOMIC DNA]</scope>
</reference>
<name>G6PI_ENDTX</name>
<gene>
    <name evidence="1" type="primary">pgi</name>
    <name type="ordered locus">TGRD_418</name>
</gene>
<accession>B1H069</accession>
<comment type="function">
    <text evidence="1">Catalyzes the reversible isomerization of glucose-6-phosphate to fructose-6-phosphate.</text>
</comment>
<comment type="catalytic activity">
    <reaction evidence="1">
        <text>alpha-D-glucose 6-phosphate = beta-D-fructose 6-phosphate</text>
        <dbReference type="Rhea" id="RHEA:11816"/>
        <dbReference type="ChEBI" id="CHEBI:57634"/>
        <dbReference type="ChEBI" id="CHEBI:58225"/>
        <dbReference type="EC" id="5.3.1.9"/>
    </reaction>
</comment>
<comment type="pathway">
    <text evidence="1">Carbohydrate biosynthesis; gluconeogenesis.</text>
</comment>
<comment type="pathway">
    <text evidence="1">Carbohydrate degradation; glycolysis; D-glyceraldehyde 3-phosphate and glycerone phosphate from D-glucose: step 2/4.</text>
</comment>
<comment type="subcellular location">
    <subcellularLocation>
        <location evidence="1">Cytoplasm</location>
    </subcellularLocation>
</comment>
<comment type="similarity">
    <text evidence="1">Belongs to the GPI family.</text>
</comment>
<proteinExistence type="inferred from homology"/>
<protein>
    <recommendedName>
        <fullName evidence="1">Glucose-6-phosphate isomerase</fullName>
        <shortName evidence="1">GPI</shortName>
        <ecNumber evidence="1">5.3.1.9</ecNumber>
    </recommendedName>
    <alternativeName>
        <fullName evidence="1">Phosphoglucose isomerase</fullName>
        <shortName evidence="1">PGI</shortName>
    </alternativeName>
    <alternativeName>
        <fullName evidence="1">Phosphohexose isomerase</fullName>
        <shortName evidence="1">PHI</shortName>
    </alternativeName>
</protein>
<sequence>MSKFGLKNTPQWQGLEKNYREIKKIHLRELFKDENRFNKFSIRDNDLGITFDYSKNIINSDTFKLLIEFVKAAKVTEYAKKMFSGEKINWTEKRAVLHTALRNRSNMPIYVNGKDVMPEIKAVLKKMENFSNDLRSGKWVGATGKKVTDVVNIGIGGSDLGPKMVCESLKYYADGPNVYFVSNIDGADIYEVLKKLNPGTTLFIVASKTFTTLETITNALTARKWLTDKLGDKAVANHFVALSTNVKKVKEFGIDENNMFEFWSFVGGRYSLWSAIGLPIACYVGFDKFIELLDGAYYIDQHFLNAPYEKNIPVIMAALGVWYNNFWGASSHAVLPYSQYLNKFPAYLQQGDMESNGKTINFEGRRVDYGTGPIIWGESGTNGQHSFYQLIHQGTKFIPCDFIGFVNPPEKIGDHHEKLMANYFAQTEALAFGLTKEEVAKNLKKAGISPADIKILTPHKIFEGNKPTNSILFDELTPRTLGALIALYEHKIFTQGIMWRINSFDQWGVELGKVLANVILPELKGQTDNKHDNSTKNLIKIFNSNKK</sequence>
<feature type="chain" id="PRO_1000125772" description="Glucose-6-phosphate isomerase">
    <location>
        <begin position="1"/>
        <end position="547"/>
    </location>
</feature>
<feature type="active site" description="Proton donor" evidence="1">
    <location>
        <position position="354"/>
    </location>
</feature>
<feature type="active site" evidence="1">
    <location>
        <position position="385"/>
    </location>
</feature>
<feature type="active site" evidence="1">
    <location>
        <position position="513"/>
    </location>
</feature>
<keyword id="KW-0963">Cytoplasm</keyword>
<keyword id="KW-0312">Gluconeogenesis</keyword>
<keyword id="KW-0324">Glycolysis</keyword>
<keyword id="KW-0413">Isomerase</keyword>
<dbReference type="EC" id="5.3.1.9" evidence="1"/>
<dbReference type="EMBL" id="AP009510">
    <property type="protein sequence ID" value="BAG13901.1"/>
    <property type="molecule type" value="Genomic_DNA"/>
</dbReference>
<dbReference type="RefSeq" id="WP_015423427.1">
    <property type="nucleotide sequence ID" value="NC_020419.1"/>
</dbReference>
<dbReference type="SMR" id="B1H069"/>
<dbReference type="STRING" id="471821.TGRD_418"/>
<dbReference type="KEGG" id="rsd:TGRD_418"/>
<dbReference type="PATRIC" id="fig|471821.5.peg.680"/>
<dbReference type="HOGENOM" id="CLU_017947_3_1_0"/>
<dbReference type="UniPathway" id="UPA00109">
    <property type="reaction ID" value="UER00181"/>
</dbReference>
<dbReference type="UniPathway" id="UPA00138"/>
<dbReference type="Proteomes" id="UP000001691">
    <property type="component" value="Chromosome"/>
</dbReference>
<dbReference type="GO" id="GO:0005829">
    <property type="term" value="C:cytosol"/>
    <property type="evidence" value="ECO:0007669"/>
    <property type="project" value="TreeGrafter"/>
</dbReference>
<dbReference type="GO" id="GO:0097367">
    <property type="term" value="F:carbohydrate derivative binding"/>
    <property type="evidence" value="ECO:0007669"/>
    <property type="project" value="InterPro"/>
</dbReference>
<dbReference type="GO" id="GO:0004347">
    <property type="term" value="F:glucose-6-phosphate isomerase activity"/>
    <property type="evidence" value="ECO:0007669"/>
    <property type="project" value="UniProtKB-UniRule"/>
</dbReference>
<dbReference type="GO" id="GO:0048029">
    <property type="term" value="F:monosaccharide binding"/>
    <property type="evidence" value="ECO:0007669"/>
    <property type="project" value="TreeGrafter"/>
</dbReference>
<dbReference type="GO" id="GO:0006094">
    <property type="term" value="P:gluconeogenesis"/>
    <property type="evidence" value="ECO:0007669"/>
    <property type="project" value="UniProtKB-UniRule"/>
</dbReference>
<dbReference type="GO" id="GO:0051156">
    <property type="term" value="P:glucose 6-phosphate metabolic process"/>
    <property type="evidence" value="ECO:0007669"/>
    <property type="project" value="TreeGrafter"/>
</dbReference>
<dbReference type="GO" id="GO:0006096">
    <property type="term" value="P:glycolytic process"/>
    <property type="evidence" value="ECO:0007669"/>
    <property type="project" value="UniProtKB-UniRule"/>
</dbReference>
<dbReference type="CDD" id="cd05015">
    <property type="entry name" value="SIS_PGI_1"/>
    <property type="match status" value="1"/>
</dbReference>
<dbReference type="CDD" id="cd05016">
    <property type="entry name" value="SIS_PGI_2"/>
    <property type="match status" value="1"/>
</dbReference>
<dbReference type="FunFam" id="1.10.1390.10:FF:000001">
    <property type="entry name" value="Glucose-6-phosphate isomerase"/>
    <property type="match status" value="1"/>
</dbReference>
<dbReference type="FunFam" id="3.40.50.10490:FF:000004">
    <property type="entry name" value="Glucose-6-phosphate isomerase"/>
    <property type="match status" value="1"/>
</dbReference>
<dbReference type="Gene3D" id="1.10.1390.10">
    <property type="match status" value="1"/>
</dbReference>
<dbReference type="Gene3D" id="3.40.50.10490">
    <property type="entry name" value="Glucose-6-phosphate isomerase like protein, domain 1"/>
    <property type="match status" value="2"/>
</dbReference>
<dbReference type="HAMAP" id="MF_00473">
    <property type="entry name" value="G6P_isomerase"/>
    <property type="match status" value="1"/>
</dbReference>
<dbReference type="InterPro" id="IPR001672">
    <property type="entry name" value="G6P_Isomerase"/>
</dbReference>
<dbReference type="InterPro" id="IPR023096">
    <property type="entry name" value="G6P_Isomerase_C"/>
</dbReference>
<dbReference type="InterPro" id="IPR018189">
    <property type="entry name" value="Phosphoglucose_isomerase_CS"/>
</dbReference>
<dbReference type="InterPro" id="IPR046348">
    <property type="entry name" value="SIS_dom_sf"/>
</dbReference>
<dbReference type="InterPro" id="IPR035476">
    <property type="entry name" value="SIS_PGI_1"/>
</dbReference>
<dbReference type="InterPro" id="IPR035482">
    <property type="entry name" value="SIS_PGI_2"/>
</dbReference>
<dbReference type="NCBIfam" id="NF001211">
    <property type="entry name" value="PRK00179.1"/>
    <property type="match status" value="1"/>
</dbReference>
<dbReference type="PANTHER" id="PTHR11469">
    <property type="entry name" value="GLUCOSE-6-PHOSPHATE ISOMERASE"/>
    <property type="match status" value="1"/>
</dbReference>
<dbReference type="PANTHER" id="PTHR11469:SF1">
    <property type="entry name" value="GLUCOSE-6-PHOSPHATE ISOMERASE"/>
    <property type="match status" value="1"/>
</dbReference>
<dbReference type="Pfam" id="PF00342">
    <property type="entry name" value="PGI"/>
    <property type="match status" value="1"/>
</dbReference>
<dbReference type="PRINTS" id="PR00662">
    <property type="entry name" value="G6PISOMERASE"/>
</dbReference>
<dbReference type="SUPFAM" id="SSF53697">
    <property type="entry name" value="SIS domain"/>
    <property type="match status" value="1"/>
</dbReference>
<dbReference type="PROSITE" id="PS00765">
    <property type="entry name" value="P_GLUCOSE_ISOMERASE_1"/>
    <property type="match status" value="1"/>
</dbReference>
<dbReference type="PROSITE" id="PS00174">
    <property type="entry name" value="P_GLUCOSE_ISOMERASE_2"/>
    <property type="match status" value="1"/>
</dbReference>
<dbReference type="PROSITE" id="PS51463">
    <property type="entry name" value="P_GLUCOSE_ISOMERASE_3"/>
    <property type="match status" value="1"/>
</dbReference>